<protein>
    <recommendedName>
        <fullName>Mitogen-activated protein kinase 10</fullName>
        <shortName>AtMPK10</shortName>
        <shortName>MAP kinase 10</shortName>
        <ecNumber>2.7.11.24</ecNumber>
    </recommendedName>
</protein>
<dbReference type="EC" id="2.7.11.24"/>
<dbReference type="EMBL" id="AL138647">
    <property type="protein sequence ID" value="CAB75798.1"/>
    <property type="molecule type" value="Genomic_DNA"/>
</dbReference>
<dbReference type="EMBL" id="CP002686">
    <property type="protein sequence ID" value="AEE79969.1"/>
    <property type="molecule type" value="Genomic_DNA"/>
</dbReference>
<dbReference type="PIR" id="T47803">
    <property type="entry name" value="T47803"/>
</dbReference>
<dbReference type="RefSeq" id="NP_191538.1">
    <property type="nucleotide sequence ID" value="NM_115841.2"/>
</dbReference>
<dbReference type="SMR" id="Q9M1Z5"/>
<dbReference type="BioGRID" id="10462">
    <property type="interactions" value="178"/>
</dbReference>
<dbReference type="FunCoup" id="Q9M1Z5">
    <property type="interactions" value="2870"/>
</dbReference>
<dbReference type="IntAct" id="Q9M1Z5">
    <property type="interactions" value="3"/>
</dbReference>
<dbReference type="STRING" id="3702.Q9M1Z5"/>
<dbReference type="iPTMnet" id="Q9M1Z5"/>
<dbReference type="PaxDb" id="3702-AT3G59790.1"/>
<dbReference type="ProteomicsDB" id="238901"/>
<dbReference type="EnsemblPlants" id="AT3G59790.1">
    <property type="protein sequence ID" value="AT3G59790.1"/>
    <property type="gene ID" value="AT3G59790"/>
</dbReference>
<dbReference type="GeneID" id="825148"/>
<dbReference type="Gramene" id="AT3G59790.1">
    <property type="protein sequence ID" value="AT3G59790.1"/>
    <property type="gene ID" value="AT3G59790"/>
</dbReference>
<dbReference type="KEGG" id="ath:AT3G59790"/>
<dbReference type="Araport" id="AT3G59790"/>
<dbReference type="TAIR" id="AT3G59790">
    <property type="gene designation" value="MPK10"/>
</dbReference>
<dbReference type="eggNOG" id="KOG0660">
    <property type="taxonomic scope" value="Eukaryota"/>
</dbReference>
<dbReference type="HOGENOM" id="CLU_000288_181_1_1"/>
<dbReference type="InParanoid" id="Q9M1Z5"/>
<dbReference type="OMA" id="CEALAFN"/>
<dbReference type="PhylomeDB" id="Q9M1Z5"/>
<dbReference type="PRO" id="PR:Q9M1Z5"/>
<dbReference type="Proteomes" id="UP000006548">
    <property type="component" value="Chromosome 3"/>
</dbReference>
<dbReference type="ExpressionAtlas" id="Q9M1Z5">
    <property type="expression patterns" value="baseline and differential"/>
</dbReference>
<dbReference type="GO" id="GO:0005524">
    <property type="term" value="F:ATP binding"/>
    <property type="evidence" value="ECO:0007669"/>
    <property type="project" value="UniProtKB-KW"/>
</dbReference>
<dbReference type="GO" id="GO:0004707">
    <property type="term" value="F:MAP kinase activity"/>
    <property type="evidence" value="ECO:0000314"/>
    <property type="project" value="TAIR"/>
</dbReference>
<dbReference type="GO" id="GO:0106310">
    <property type="term" value="F:protein serine kinase activity"/>
    <property type="evidence" value="ECO:0007669"/>
    <property type="project" value="RHEA"/>
</dbReference>
<dbReference type="GO" id="GO:0060918">
    <property type="term" value="P:auxin transport"/>
    <property type="evidence" value="ECO:0000315"/>
    <property type="project" value="TAIR"/>
</dbReference>
<dbReference type="GO" id="GO:0010051">
    <property type="term" value="P:xylem and phloem pattern formation"/>
    <property type="evidence" value="ECO:0000315"/>
    <property type="project" value="TAIR"/>
</dbReference>
<dbReference type="FunFam" id="1.10.510.10:FF:000013">
    <property type="entry name" value="Mitogen-activated protein kinase"/>
    <property type="match status" value="1"/>
</dbReference>
<dbReference type="FunFam" id="3.30.200.20:FF:000046">
    <property type="entry name" value="Mitogen-activated protein kinase"/>
    <property type="match status" value="1"/>
</dbReference>
<dbReference type="Gene3D" id="3.30.200.20">
    <property type="entry name" value="Phosphorylase Kinase, domain 1"/>
    <property type="match status" value="1"/>
</dbReference>
<dbReference type="Gene3D" id="1.10.510.10">
    <property type="entry name" value="Transferase(Phosphotransferase) domain 1"/>
    <property type="match status" value="1"/>
</dbReference>
<dbReference type="InterPro" id="IPR011009">
    <property type="entry name" value="Kinase-like_dom_sf"/>
</dbReference>
<dbReference type="InterPro" id="IPR050117">
    <property type="entry name" value="MAP_kinase"/>
</dbReference>
<dbReference type="InterPro" id="IPR003527">
    <property type="entry name" value="MAP_kinase_CS"/>
</dbReference>
<dbReference type="InterPro" id="IPR000719">
    <property type="entry name" value="Prot_kinase_dom"/>
</dbReference>
<dbReference type="InterPro" id="IPR008271">
    <property type="entry name" value="Ser/Thr_kinase_AS"/>
</dbReference>
<dbReference type="PANTHER" id="PTHR24055">
    <property type="entry name" value="MITOGEN-ACTIVATED PROTEIN KINASE"/>
    <property type="match status" value="1"/>
</dbReference>
<dbReference type="Pfam" id="PF00069">
    <property type="entry name" value="Pkinase"/>
    <property type="match status" value="1"/>
</dbReference>
<dbReference type="SMART" id="SM00220">
    <property type="entry name" value="S_TKc"/>
    <property type="match status" value="1"/>
</dbReference>
<dbReference type="SUPFAM" id="SSF56112">
    <property type="entry name" value="Protein kinase-like (PK-like)"/>
    <property type="match status" value="1"/>
</dbReference>
<dbReference type="PROSITE" id="PS01351">
    <property type="entry name" value="MAPK"/>
    <property type="match status" value="1"/>
</dbReference>
<dbReference type="PROSITE" id="PS50011">
    <property type="entry name" value="PROTEIN_KINASE_DOM"/>
    <property type="match status" value="1"/>
</dbReference>
<dbReference type="PROSITE" id="PS00108">
    <property type="entry name" value="PROTEIN_KINASE_ST"/>
    <property type="match status" value="1"/>
</dbReference>
<reference key="1">
    <citation type="journal article" date="2000" name="Nature">
        <title>Sequence and analysis of chromosome 3 of the plant Arabidopsis thaliana.</title>
        <authorList>
            <person name="Salanoubat M."/>
            <person name="Lemcke K."/>
            <person name="Rieger M."/>
            <person name="Ansorge W."/>
            <person name="Unseld M."/>
            <person name="Fartmann B."/>
            <person name="Valle G."/>
            <person name="Bloecker H."/>
            <person name="Perez-Alonso M."/>
            <person name="Obermaier B."/>
            <person name="Delseny M."/>
            <person name="Boutry M."/>
            <person name="Grivell L.A."/>
            <person name="Mache R."/>
            <person name="Puigdomenech P."/>
            <person name="De Simone V."/>
            <person name="Choisne N."/>
            <person name="Artiguenave F."/>
            <person name="Robert C."/>
            <person name="Brottier P."/>
            <person name="Wincker P."/>
            <person name="Cattolico L."/>
            <person name="Weissenbach J."/>
            <person name="Saurin W."/>
            <person name="Quetier F."/>
            <person name="Schaefer M."/>
            <person name="Mueller-Auer S."/>
            <person name="Gabel C."/>
            <person name="Fuchs M."/>
            <person name="Benes V."/>
            <person name="Wurmbach E."/>
            <person name="Drzonek H."/>
            <person name="Erfle H."/>
            <person name="Jordan N."/>
            <person name="Bangert S."/>
            <person name="Wiedelmann R."/>
            <person name="Kranz H."/>
            <person name="Voss H."/>
            <person name="Holland R."/>
            <person name="Brandt P."/>
            <person name="Nyakatura G."/>
            <person name="Vezzi A."/>
            <person name="D'Angelo M."/>
            <person name="Pallavicini A."/>
            <person name="Toppo S."/>
            <person name="Simionati B."/>
            <person name="Conrad A."/>
            <person name="Hornischer K."/>
            <person name="Kauer G."/>
            <person name="Loehnert T.-H."/>
            <person name="Nordsiek G."/>
            <person name="Reichelt J."/>
            <person name="Scharfe M."/>
            <person name="Schoen O."/>
            <person name="Bargues M."/>
            <person name="Terol J."/>
            <person name="Climent J."/>
            <person name="Navarro P."/>
            <person name="Collado C."/>
            <person name="Perez-Perez A."/>
            <person name="Ottenwaelder B."/>
            <person name="Duchemin D."/>
            <person name="Cooke R."/>
            <person name="Laudie M."/>
            <person name="Berger-Llauro C."/>
            <person name="Purnelle B."/>
            <person name="Masuy D."/>
            <person name="de Haan M."/>
            <person name="Maarse A.C."/>
            <person name="Alcaraz J.-P."/>
            <person name="Cottet A."/>
            <person name="Casacuberta E."/>
            <person name="Monfort A."/>
            <person name="Argiriou A."/>
            <person name="Flores M."/>
            <person name="Liguori R."/>
            <person name="Vitale D."/>
            <person name="Mannhaupt G."/>
            <person name="Haase D."/>
            <person name="Schoof H."/>
            <person name="Rudd S."/>
            <person name="Zaccaria P."/>
            <person name="Mewes H.-W."/>
            <person name="Mayer K.F.X."/>
            <person name="Kaul S."/>
            <person name="Town C.D."/>
            <person name="Koo H.L."/>
            <person name="Tallon L.J."/>
            <person name="Jenkins J."/>
            <person name="Rooney T."/>
            <person name="Rizzo M."/>
            <person name="Walts A."/>
            <person name="Utterback T."/>
            <person name="Fujii C.Y."/>
            <person name="Shea T.P."/>
            <person name="Creasy T.H."/>
            <person name="Haas B."/>
            <person name="Maiti R."/>
            <person name="Wu D."/>
            <person name="Peterson J."/>
            <person name="Van Aken S."/>
            <person name="Pai G."/>
            <person name="Militscher J."/>
            <person name="Sellers P."/>
            <person name="Gill J.E."/>
            <person name="Feldblyum T.V."/>
            <person name="Preuss D."/>
            <person name="Lin X."/>
            <person name="Nierman W.C."/>
            <person name="Salzberg S.L."/>
            <person name="White O."/>
            <person name="Venter J.C."/>
            <person name="Fraser C.M."/>
            <person name="Kaneko T."/>
            <person name="Nakamura Y."/>
            <person name="Sato S."/>
            <person name="Kato T."/>
            <person name="Asamizu E."/>
            <person name="Sasamoto S."/>
            <person name="Kimura T."/>
            <person name="Idesawa K."/>
            <person name="Kawashima K."/>
            <person name="Kishida Y."/>
            <person name="Kiyokawa C."/>
            <person name="Kohara M."/>
            <person name="Matsumoto M."/>
            <person name="Matsuno A."/>
            <person name="Muraki A."/>
            <person name="Nakayama S."/>
            <person name="Nakazaki N."/>
            <person name="Shinpo S."/>
            <person name="Takeuchi C."/>
            <person name="Wada T."/>
            <person name="Watanabe A."/>
            <person name="Yamada M."/>
            <person name="Yasuda M."/>
            <person name="Tabata S."/>
        </authorList>
    </citation>
    <scope>NUCLEOTIDE SEQUENCE [LARGE SCALE GENOMIC DNA]</scope>
    <source>
        <strain>cv. Columbia</strain>
    </source>
</reference>
<reference key="2">
    <citation type="journal article" date="2017" name="Plant J.">
        <title>Araport11: a complete reannotation of the Arabidopsis thaliana reference genome.</title>
        <authorList>
            <person name="Cheng C.Y."/>
            <person name="Krishnakumar V."/>
            <person name="Chan A.P."/>
            <person name="Thibaud-Nissen F."/>
            <person name="Schobel S."/>
            <person name="Town C.D."/>
        </authorList>
    </citation>
    <scope>GENOME REANNOTATION</scope>
    <source>
        <strain>cv. Columbia</strain>
    </source>
</reference>
<reference key="3">
    <citation type="journal article" date="2002" name="Trends Plant Sci.">
        <title>Mitogen-activated protein kinase cascades in plants: a new nomenclature.</title>
        <authorList>
            <consortium name="MAPK group"/>
        </authorList>
    </citation>
    <scope>GENE FAMILY</scope>
    <scope>NOMENCLATURE</scope>
</reference>
<reference key="4">
    <citation type="journal article" date="2006" name="Trends Plant Sci.">
        <title>Ancient signals: comparative genomics of plant MAPK and MAPKK gene families.</title>
        <authorList>
            <person name="Hamel L.P."/>
            <person name="Nicole M.C."/>
            <person name="Sritubtim S."/>
            <person name="Morency M.J."/>
            <person name="Ellis M."/>
            <person name="Ehlting J."/>
            <person name="Beaudoin N."/>
            <person name="Barbazuk B."/>
            <person name="Klessig D."/>
            <person name="Lee J."/>
            <person name="Martin G."/>
            <person name="Mundy J."/>
            <person name="Ohashi Y."/>
            <person name="Scheel D."/>
            <person name="Sheen J."/>
            <person name="Xing T."/>
            <person name="Zhang S."/>
            <person name="Seguin A."/>
            <person name="Ellis B.E."/>
        </authorList>
    </citation>
    <scope>GENE FAMILY</scope>
</reference>
<reference key="5">
    <citation type="journal article" date="2008" name="Plant Signal. Behav.">
        <title>Comprehensive analysis of protein-protein interactions between Arabidopsis MAPKs and MAPK kinases helps define potential MAPK signalling modules.</title>
        <authorList>
            <person name="Lee J.S."/>
            <person name="Huh K.W."/>
            <person name="Bhargava A."/>
            <person name="Ellis B.E."/>
        </authorList>
    </citation>
    <scope>INTERACTION WITH MKK2</scope>
</reference>
<gene>
    <name type="primary">MPK10</name>
    <name type="ordered locus">At3g59790</name>
    <name type="ORF">F24G16.60</name>
</gene>
<proteinExistence type="evidence at protein level"/>
<evidence type="ECO:0000250" key="1"/>
<evidence type="ECO:0000250" key="2">
    <source>
        <dbReference type="UniProtKB" id="Q39026"/>
    </source>
</evidence>
<evidence type="ECO:0000255" key="3">
    <source>
        <dbReference type="PROSITE-ProRule" id="PRU00159"/>
    </source>
</evidence>
<evidence type="ECO:0000255" key="4">
    <source>
        <dbReference type="PROSITE-ProRule" id="PRU10027"/>
    </source>
</evidence>
<evidence type="ECO:0000269" key="5">
    <source>
    </source>
</evidence>
<evidence type="ECO:0000305" key="6"/>
<sequence>MEPTNDAETLETQGEVTTAIWPSSQILKTTIDIPGTLSHDGRYIQYNLFGHIFELPAKYKPPIRPIGRGACGIVCSAVDSETNEKVAIKKITQVFDNTIEAKRTLREIKLLRHFDHENIVAIRDVILPPQRDSFEDVYIVNELMEFDLYRTLKSDQELTKDHGMYFMYQILRGLKYIHSANVLHRDLKPSNLLLSTQCDLKICDFGLARATPESNLMTEYVVTRWYRAPELLLGSSDYTAAIDVWSVGCIFMEIMNREPLFPGKDQVNQLRLLLELIGTPSEEELGSLSEYAKRYIRQLPTLPRQSFTEKFPNVPPLAIDLVEKMLTFDPKQRISVKEALAHPYLSSFHDITDEPECSEPFNFDLDEHPFSEEQFRELIYCEALAFNPETSND</sequence>
<organism>
    <name type="scientific">Arabidopsis thaliana</name>
    <name type="common">Mouse-ear cress</name>
    <dbReference type="NCBI Taxonomy" id="3702"/>
    <lineage>
        <taxon>Eukaryota</taxon>
        <taxon>Viridiplantae</taxon>
        <taxon>Streptophyta</taxon>
        <taxon>Embryophyta</taxon>
        <taxon>Tracheophyta</taxon>
        <taxon>Spermatophyta</taxon>
        <taxon>Magnoliopsida</taxon>
        <taxon>eudicotyledons</taxon>
        <taxon>Gunneridae</taxon>
        <taxon>Pentapetalae</taxon>
        <taxon>rosids</taxon>
        <taxon>malvids</taxon>
        <taxon>Brassicales</taxon>
        <taxon>Brassicaceae</taxon>
        <taxon>Camelineae</taxon>
        <taxon>Arabidopsis</taxon>
    </lineage>
</organism>
<accession>Q9M1Z5</accession>
<name>MPK10_ARATH</name>
<keyword id="KW-0067">ATP-binding</keyword>
<keyword id="KW-0418">Kinase</keyword>
<keyword id="KW-0547">Nucleotide-binding</keyword>
<keyword id="KW-0597">Phosphoprotein</keyword>
<keyword id="KW-1185">Reference proteome</keyword>
<keyword id="KW-0723">Serine/threonine-protein kinase</keyword>
<keyword id="KW-0808">Transferase</keyword>
<comment type="catalytic activity">
    <reaction>
        <text>L-seryl-[protein] + ATP = O-phospho-L-seryl-[protein] + ADP + H(+)</text>
        <dbReference type="Rhea" id="RHEA:17989"/>
        <dbReference type="Rhea" id="RHEA-COMP:9863"/>
        <dbReference type="Rhea" id="RHEA-COMP:11604"/>
        <dbReference type="ChEBI" id="CHEBI:15378"/>
        <dbReference type="ChEBI" id="CHEBI:29999"/>
        <dbReference type="ChEBI" id="CHEBI:30616"/>
        <dbReference type="ChEBI" id="CHEBI:83421"/>
        <dbReference type="ChEBI" id="CHEBI:456216"/>
        <dbReference type="EC" id="2.7.11.24"/>
    </reaction>
</comment>
<comment type="catalytic activity">
    <reaction>
        <text>L-threonyl-[protein] + ATP = O-phospho-L-threonyl-[protein] + ADP + H(+)</text>
        <dbReference type="Rhea" id="RHEA:46608"/>
        <dbReference type="Rhea" id="RHEA-COMP:11060"/>
        <dbReference type="Rhea" id="RHEA-COMP:11605"/>
        <dbReference type="ChEBI" id="CHEBI:15378"/>
        <dbReference type="ChEBI" id="CHEBI:30013"/>
        <dbReference type="ChEBI" id="CHEBI:30616"/>
        <dbReference type="ChEBI" id="CHEBI:61977"/>
        <dbReference type="ChEBI" id="CHEBI:456216"/>
        <dbReference type="EC" id="2.7.11.24"/>
    </reaction>
</comment>
<comment type="activity regulation">
    <text evidence="1">Activated by threonine and tyrosine phosphorylation.</text>
</comment>
<comment type="subunit">
    <text evidence="5">Interacts with MKK2.</text>
</comment>
<comment type="interaction">
    <interactant intactId="EBI-2358527">
        <id>Q9M1Z5</id>
    </interactant>
    <interactant intactId="EBI-994350">
        <id>Q9S7U9</id>
        <label>MKK2</label>
    </interactant>
    <organismsDiffer>false</organismsDiffer>
    <experiments>2</experiments>
</comment>
<comment type="interaction">
    <interactant intactId="EBI-2358527">
        <id>Q9M1Z5</id>
    </interactant>
    <interactant intactId="EBI-2128545">
        <id>Q9FX43</id>
        <label>MKK9</label>
    </interactant>
    <organismsDiffer>false</organismsDiffer>
    <experiments>2</experiments>
</comment>
<comment type="interaction">
    <interactant intactId="EBI-2358527">
        <id>Q9M1Z5</id>
    </interactant>
    <interactant intactId="EBI-15217402">
        <id>Q9LZK4</id>
        <label>MYB11</label>
    </interactant>
    <organismsDiffer>false</organismsDiffer>
    <experiments>3</experiments>
</comment>
<comment type="domain">
    <text>The TXY motif contains the threonine and tyrosine residues whose phosphorylation activates the MAP kinases.</text>
</comment>
<comment type="PTM">
    <text evidence="1">Dually phosphorylated on Thr-218 and Tyr-220, which activates the enzyme.</text>
</comment>
<comment type="similarity">
    <text evidence="6">Belongs to the protein kinase superfamily. CMGC Ser/Thr protein kinase family. MAP kinase subfamily.</text>
</comment>
<feature type="chain" id="PRO_0000245810" description="Mitogen-activated protein kinase 10">
    <location>
        <begin position="1"/>
        <end position="393"/>
    </location>
</feature>
<feature type="domain" description="Protein kinase" evidence="3">
    <location>
        <begin position="60"/>
        <end position="345"/>
    </location>
</feature>
<feature type="short sequence motif" description="TXY">
    <location>
        <begin position="218"/>
        <end position="220"/>
    </location>
</feature>
<feature type="active site" description="Proton acceptor" evidence="3 4">
    <location>
        <position position="186"/>
    </location>
</feature>
<feature type="binding site" evidence="3">
    <location>
        <begin position="66"/>
        <end position="74"/>
    </location>
    <ligand>
        <name>ATP</name>
        <dbReference type="ChEBI" id="CHEBI:30616"/>
    </ligand>
</feature>
<feature type="binding site" evidence="3">
    <location>
        <position position="89"/>
    </location>
    <ligand>
        <name>ATP</name>
        <dbReference type="ChEBI" id="CHEBI:30616"/>
    </ligand>
</feature>
<feature type="modified residue" description="Phosphothreonine" evidence="2">
    <location>
        <position position="218"/>
    </location>
</feature>
<feature type="modified residue" description="Phosphotyrosine" evidence="2">
    <location>
        <position position="220"/>
    </location>
</feature>
<feature type="modified residue" description="Phosphothreonine" evidence="2">
    <location>
        <position position="223"/>
    </location>
</feature>